<name>AROA_ACICJ</name>
<keyword id="KW-0028">Amino-acid biosynthesis</keyword>
<keyword id="KW-0057">Aromatic amino acid biosynthesis</keyword>
<keyword id="KW-0963">Cytoplasm</keyword>
<keyword id="KW-1185">Reference proteome</keyword>
<keyword id="KW-0808">Transferase</keyword>
<accession>A5FUH8</accession>
<dbReference type="EC" id="2.5.1.19" evidence="1"/>
<dbReference type="EMBL" id="CP000697">
    <property type="protein sequence ID" value="ABQ29260.1"/>
    <property type="molecule type" value="Genomic_DNA"/>
</dbReference>
<dbReference type="RefSeq" id="WP_007424234.1">
    <property type="nucleotide sequence ID" value="NC_009484.1"/>
</dbReference>
<dbReference type="SMR" id="A5FUH8"/>
<dbReference type="STRING" id="349163.Acry_0031"/>
<dbReference type="KEGG" id="acr:Acry_0031"/>
<dbReference type="eggNOG" id="COG0128">
    <property type="taxonomic scope" value="Bacteria"/>
</dbReference>
<dbReference type="HOGENOM" id="CLU_024321_0_1_5"/>
<dbReference type="UniPathway" id="UPA00053">
    <property type="reaction ID" value="UER00089"/>
</dbReference>
<dbReference type="Proteomes" id="UP000000245">
    <property type="component" value="Chromosome"/>
</dbReference>
<dbReference type="GO" id="GO:0005737">
    <property type="term" value="C:cytoplasm"/>
    <property type="evidence" value="ECO:0007669"/>
    <property type="project" value="UniProtKB-SubCell"/>
</dbReference>
<dbReference type="GO" id="GO:0003866">
    <property type="term" value="F:3-phosphoshikimate 1-carboxyvinyltransferase activity"/>
    <property type="evidence" value="ECO:0007669"/>
    <property type="project" value="UniProtKB-UniRule"/>
</dbReference>
<dbReference type="GO" id="GO:0008652">
    <property type="term" value="P:amino acid biosynthetic process"/>
    <property type="evidence" value="ECO:0007669"/>
    <property type="project" value="UniProtKB-KW"/>
</dbReference>
<dbReference type="GO" id="GO:0009073">
    <property type="term" value="P:aromatic amino acid family biosynthetic process"/>
    <property type="evidence" value="ECO:0007669"/>
    <property type="project" value="UniProtKB-KW"/>
</dbReference>
<dbReference type="GO" id="GO:0009423">
    <property type="term" value="P:chorismate biosynthetic process"/>
    <property type="evidence" value="ECO:0007669"/>
    <property type="project" value="UniProtKB-UniRule"/>
</dbReference>
<dbReference type="CDD" id="cd01556">
    <property type="entry name" value="EPSP_synthase"/>
    <property type="match status" value="1"/>
</dbReference>
<dbReference type="FunFam" id="3.65.10.10:FF:000005">
    <property type="entry name" value="3-phosphoshikimate 1-carboxyvinyltransferase"/>
    <property type="match status" value="1"/>
</dbReference>
<dbReference type="Gene3D" id="3.65.10.10">
    <property type="entry name" value="Enolpyruvate transferase domain"/>
    <property type="match status" value="2"/>
</dbReference>
<dbReference type="HAMAP" id="MF_00210">
    <property type="entry name" value="EPSP_synth"/>
    <property type="match status" value="1"/>
</dbReference>
<dbReference type="InterPro" id="IPR001986">
    <property type="entry name" value="Enolpyruvate_Tfrase_dom"/>
</dbReference>
<dbReference type="InterPro" id="IPR036968">
    <property type="entry name" value="Enolpyruvate_Tfrase_sf"/>
</dbReference>
<dbReference type="InterPro" id="IPR006264">
    <property type="entry name" value="EPSP_synthase"/>
</dbReference>
<dbReference type="InterPro" id="IPR023193">
    <property type="entry name" value="EPSP_synthase_CS"/>
</dbReference>
<dbReference type="InterPro" id="IPR013792">
    <property type="entry name" value="RNA3'P_cycl/enolpyr_Trfase_a/b"/>
</dbReference>
<dbReference type="NCBIfam" id="TIGR01356">
    <property type="entry name" value="aroA"/>
    <property type="match status" value="1"/>
</dbReference>
<dbReference type="PANTHER" id="PTHR21090">
    <property type="entry name" value="AROM/DEHYDROQUINATE SYNTHASE"/>
    <property type="match status" value="1"/>
</dbReference>
<dbReference type="PANTHER" id="PTHR21090:SF5">
    <property type="entry name" value="PENTAFUNCTIONAL AROM POLYPEPTIDE"/>
    <property type="match status" value="1"/>
</dbReference>
<dbReference type="Pfam" id="PF00275">
    <property type="entry name" value="EPSP_synthase"/>
    <property type="match status" value="1"/>
</dbReference>
<dbReference type="PIRSF" id="PIRSF000505">
    <property type="entry name" value="EPSPS"/>
    <property type="match status" value="1"/>
</dbReference>
<dbReference type="SUPFAM" id="SSF55205">
    <property type="entry name" value="EPT/RTPC-like"/>
    <property type="match status" value="1"/>
</dbReference>
<dbReference type="PROSITE" id="PS00104">
    <property type="entry name" value="EPSP_SYNTHASE_1"/>
    <property type="match status" value="1"/>
</dbReference>
<dbReference type="PROSITE" id="PS00885">
    <property type="entry name" value="EPSP_SYNTHASE_2"/>
    <property type="match status" value="1"/>
</dbReference>
<sequence>MEHAATLPQTSRRPATPLTGTITVPGDKSISHRALMFAGLAVGETRISGLLEGEDVLRTAAAMRALGATVERTGPGAWRASGPGIGGLQSPDDVLDMGNSGTAARLLCGILASHDIFAVMTGDASLRRRPMRRVIDPLGATGAVFAAREGGRLPLSVRGAAEAMPLSYRLPVASAQVKSALLLAGLNARGITEIEEPEPTRDHSENMLRHFGAEVEVAAHGTGKLIRLRGQPELRGADVVVPGDPSSAAFPIVAALIVPGSRVTIGGVGLNPLRTGLFLTLREMGAAIEIVNAREAGGEPVGDLIVTASDLRAVDVPAERAPSMIDEYPILAVACAMARGSSRLRGLAELRVKESDRLAATLAMITANGVKAQVDGDDLIIEGGGARGGATVATHMDHRLAMSALVMGLATETPVTIDDARFIDTSFPGFLPLMRGIGAAIEAAA</sequence>
<evidence type="ECO:0000255" key="1">
    <source>
        <dbReference type="HAMAP-Rule" id="MF_00210"/>
    </source>
</evidence>
<evidence type="ECO:0000256" key="2">
    <source>
        <dbReference type="SAM" id="MobiDB-lite"/>
    </source>
</evidence>
<gene>
    <name evidence="1" type="primary">aroA</name>
    <name type="ordered locus">Acry_0031</name>
</gene>
<reference key="1">
    <citation type="submission" date="2007-05" db="EMBL/GenBank/DDBJ databases">
        <title>Complete sequence of chromosome of Acidiphilium cryptum JF-5.</title>
        <authorList>
            <consortium name="US DOE Joint Genome Institute"/>
            <person name="Copeland A."/>
            <person name="Lucas S."/>
            <person name="Lapidus A."/>
            <person name="Barry K."/>
            <person name="Detter J.C."/>
            <person name="Glavina del Rio T."/>
            <person name="Hammon N."/>
            <person name="Israni S."/>
            <person name="Dalin E."/>
            <person name="Tice H."/>
            <person name="Pitluck S."/>
            <person name="Sims D."/>
            <person name="Brettin T."/>
            <person name="Bruce D."/>
            <person name="Han C."/>
            <person name="Schmutz J."/>
            <person name="Larimer F."/>
            <person name="Land M."/>
            <person name="Hauser L."/>
            <person name="Kyrpides N."/>
            <person name="Kim E."/>
            <person name="Magnuson T."/>
            <person name="Richardson P."/>
        </authorList>
    </citation>
    <scope>NUCLEOTIDE SEQUENCE [LARGE SCALE GENOMIC DNA]</scope>
    <source>
        <strain>JF-5</strain>
    </source>
</reference>
<feature type="chain" id="PRO_1000058592" description="3-phosphoshikimate 1-carboxyvinyltransferase">
    <location>
        <begin position="1"/>
        <end position="445"/>
    </location>
</feature>
<feature type="region of interest" description="Disordered" evidence="2">
    <location>
        <begin position="1"/>
        <end position="24"/>
    </location>
</feature>
<feature type="compositionally biased region" description="Polar residues" evidence="2">
    <location>
        <begin position="7"/>
        <end position="22"/>
    </location>
</feature>
<feature type="active site" description="Proton acceptor" evidence="1">
    <location>
        <position position="326"/>
    </location>
</feature>
<feature type="binding site" evidence="1">
    <location>
        <position position="28"/>
    </location>
    <ligand>
        <name>3-phosphoshikimate</name>
        <dbReference type="ChEBI" id="CHEBI:145989"/>
    </ligand>
</feature>
<feature type="binding site" evidence="1">
    <location>
        <position position="28"/>
    </location>
    <ligand>
        <name>phosphoenolpyruvate</name>
        <dbReference type="ChEBI" id="CHEBI:58702"/>
    </ligand>
</feature>
<feature type="binding site" evidence="1">
    <location>
        <position position="29"/>
    </location>
    <ligand>
        <name>3-phosphoshikimate</name>
        <dbReference type="ChEBI" id="CHEBI:145989"/>
    </ligand>
</feature>
<feature type="binding site" evidence="1">
    <location>
        <position position="33"/>
    </location>
    <ligand>
        <name>3-phosphoshikimate</name>
        <dbReference type="ChEBI" id="CHEBI:145989"/>
    </ligand>
</feature>
<feature type="binding site" evidence="1">
    <location>
        <position position="101"/>
    </location>
    <ligand>
        <name>phosphoenolpyruvate</name>
        <dbReference type="ChEBI" id="CHEBI:58702"/>
    </ligand>
</feature>
<feature type="binding site" evidence="1">
    <location>
        <position position="129"/>
    </location>
    <ligand>
        <name>phosphoenolpyruvate</name>
        <dbReference type="ChEBI" id="CHEBI:58702"/>
    </ligand>
</feature>
<feature type="binding site" evidence="1">
    <location>
        <position position="174"/>
    </location>
    <ligand>
        <name>3-phosphoshikimate</name>
        <dbReference type="ChEBI" id="CHEBI:145989"/>
    </ligand>
</feature>
<feature type="binding site" evidence="1">
    <location>
        <position position="176"/>
    </location>
    <ligand>
        <name>3-phosphoshikimate</name>
        <dbReference type="ChEBI" id="CHEBI:145989"/>
    </ligand>
</feature>
<feature type="binding site" evidence="1">
    <location>
        <position position="176"/>
    </location>
    <ligand>
        <name>phosphoenolpyruvate</name>
        <dbReference type="ChEBI" id="CHEBI:58702"/>
    </ligand>
</feature>
<feature type="binding site" evidence="1">
    <location>
        <position position="326"/>
    </location>
    <ligand>
        <name>3-phosphoshikimate</name>
        <dbReference type="ChEBI" id="CHEBI:145989"/>
    </ligand>
</feature>
<feature type="binding site" evidence="1">
    <location>
        <position position="353"/>
    </location>
    <ligand>
        <name>3-phosphoshikimate</name>
        <dbReference type="ChEBI" id="CHEBI:145989"/>
    </ligand>
</feature>
<feature type="binding site" evidence="1">
    <location>
        <position position="357"/>
    </location>
    <ligand>
        <name>phosphoenolpyruvate</name>
        <dbReference type="ChEBI" id="CHEBI:58702"/>
    </ligand>
</feature>
<feature type="binding site" evidence="1">
    <location>
        <position position="399"/>
    </location>
    <ligand>
        <name>phosphoenolpyruvate</name>
        <dbReference type="ChEBI" id="CHEBI:58702"/>
    </ligand>
</feature>
<comment type="function">
    <text evidence="1">Catalyzes the transfer of the enolpyruvyl moiety of phosphoenolpyruvate (PEP) to the 5-hydroxyl of shikimate-3-phosphate (S3P) to produce enolpyruvyl shikimate-3-phosphate and inorganic phosphate.</text>
</comment>
<comment type="catalytic activity">
    <reaction evidence="1">
        <text>3-phosphoshikimate + phosphoenolpyruvate = 5-O-(1-carboxyvinyl)-3-phosphoshikimate + phosphate</text>
        <dbReference type="Rhea" id="RHEA:21256"/>
        <dbReference type="ChEBI" id="CHEBI:43474"/>
        <dbReference type="ChEBI" id="CHEBI:57701"/>
        <dbReference type="ChEBI" id="CHEBI:58702"/>
        <dbReference type="ChEBI" id="CHEBI:145989"/>
        <dbReference type="EC" id="2.5.1.19"/>
    </reaction>
    <physiologicalReaction direction="left-to-right" evidence="1">
        <dbReference type="Rhea" id="RHEA:21257"/>
    </physiologicalReaction>
</comment>
<comment type="pathway">
    <text evidence="1">Metabolic intermediate biosynthesis; chorismate biosynthesis; chorismate from D-erythrose 4-phosphate and phosphoenolpyruvate: step 6/7.</text>
</comment>
<comment type="subunit">
    <text evidence="1">Monomer.</text>
</comment>
<comment type="subcellular location">
    <subcellularLocation>
        <location evidence="1">Cytoplasm</location>
    </subcellularLocation>
</comment>
<comment type="similarity">
    <text evidence="1">Belongs to the EPSP synthase family.</text>
</comment>
<proteinExistence type="inferred from homology"/>
<organism>
    <name type="scientific">Acidiphilium cryptum (strain JF-5)</name>
    <dbReference type="NCBI Taxonomy" id="349163"/>
    <lineage>
        <taxon>Bacteria</taxon>
        <taxon>Pseudomonadati</taxon>
        <taxon>Pseudomonadota</taxon>
        <taxon>Alphaproteobacteria</taxon>
        <taxon>Acetobacterales</taxon>
        <taxon>Acidocellaceae</taxon>
        <taxon>Acidiphilium</taxon>
    </lineage>
</organism>
<protein>
    <recommendedName>
        <fullName evidence="1">3-phosphoshikimate 1-carboxyvinyltransferase</fullName>
        <ecNumber evidence="1">2.5.1.19</ecNumber>
    </recommendedName>
    <alternativeName>
        <fullName evidence="1">5-enolpyruvylshikimate-3-phosphate synthase</fullName>
        <shortName evidence="1">EPSP synthase</shortName>
        <shortName evidence="1">EPSPS</shortName>
    </alternativeName>
</protein>